<gene>
    <name type="ordered locus">mll6455</name>
</gene>
<dbReference type="EMBL" id="BA000012">
    <property type="protein sequence ID" value="BAB52749.1"/>
    <property type="molecule type" value="Genomic_DNA"/>
</dbReference>
<dbReference type="RefSeq" id="WP_010914063.1">
    <property type="nucleotide sequence ID" value="NC_002678.2"/>
</dbReference>
<dbReference type="KEGG" id="mlo:mll6455"/>
<dbReference type="eggNOG" id="COG5328">
    <property type="taxonomic scope" value="Bacteria"/>
</dbReference>
<dbReference type="HOGENOM" id="CLU_112904_0_0_5"/>
<dbReference type="Proteomes" id="UP000000552">
    <property type="component" value="Chromosome"/>
</dbReference>
<dbReference type="HAMAP" id="MF_00678">
    <property type="entry name" value="UPF0262"/>
    <property type="match status" value="1"/>
</dbReference>
<dbReference type="InterPro" id="IPR008321">
    <property type="entry name" value="UCP032146"/>
</dbReference>
<dbReference type="NCBIfam" id="NF002769">
    <property type="entry name" value="PRK02853.1"/>
    <property type="match status" value="1"/>
</dbReference>
<dbReference type="Pfam" id="PF06793">
    <property type="entry name" value="UPF0262"/>
    <property type="match status" value="1"/>
</dbReference>
<dbReference type="PIRSF" id="PIRSF032146">
    <property type="entry name" value="UCP032146"/>
    <property type="match status" value="1"/>
</dbReference>
<evidence type="ECO:0000255" key="1">
    <source>
        <dbReference type="HAMAP-Rule" id="MF_00678"/>
    </source>
</evidence>
<reference key="1">
    <citation type="journal article" date="2000" name="DNA Res.">
        <title>Complete genome structure of the nitrogen-fixing symbiotic bacterium Mesorhizobium loti.</title>
        <authorList>
            <person name="Kaneko T."/>
            <person name="Nakamura Y."/>
            <person name="Sato S."/>
            <person name="Asamizu E."/>
            <person name="Kato T."/>
            <person name="Sasamoto S."/>
            <person name="Watanabe A."/>
            <person name="Idesawa K."/>
            <person name="Ishikawa A."/>
            <person name="Kawashima K."/>
            <person name="Kimura T."/>
            <person name="Kishida Y."/>
            <person name="Kiyokawa C."/>
            <person name="Kohara M."/>
            <person name="Matsumoto M."/>
            <person name="Matsuno A."/>
            <person name="Mochizuki Y."/>
            <person name="Nakayama S."/>
            <person name="Nakazaki N."/>
            <person name="Shimpo S."/>
            <person name="Sugimoto M."/>
            <person name="Takeuchi C."/>
            <person name="Yamada M."/>
            <person name="Tabata S."/>
        </authorList>
    </citation>
    <scope>NUCLEOTIDE SEQUENCE [LARGE SCALE GENOMIC DNA]</scope>
    <source>
        <strain>LMG 29417 / CECT 9101 / MAFF 303099</strain>
    </source>
</reference>
<organism>
    <name type="scientific">Mesorhizobium japonicum (strain LMG 29417 / CECT 9101 / MAFF 303099)</name>
    <name type="common">Mesorhizobium loti (strain MAFF 303099)</name>
    <dbReference type="NCBI Taxonomy" id="266835"/>
    <lineage>
        <taxon>Bacteria</taxon>
        <taxon>Pseudomonadati</taxon>
        <taxon>Pseudomonadota</taxon>
        <taxon>Alphaproteobacteria</taxon>
        <taxon>Hyphomicrobiales</taxon>
        <taxon>Phyllobacteriaceae</taxon>
        <taxon>Mesorhizobium</taxon>
    </lineage>
</organism>
<feature type="chain" id="PRO_0000220331" description="UPF0262 protein mll6455">
    <location>
        <begin position="1"/>
        <end position="161"/>
    </location>
</feature>
<protein>
    <recommendedName>
        <fullName evidence="1">UPF0262 protein mll6455</fullName>
    </recommendedName>
</protein>
<sequence length="161" mass="18169">MTGSDQTRAKLIDIELDESIGRSTPDVEHERAVAIFDLIEENSFQPVNDSGAGPYRLKLSLAEQRLVFAVAREDGTAVVTHILSLTPLRRIVKDYYMICESYYDAIRSSTPSHIEAIDMGRRGLHNEGSQTLMDRLSGKIDIDFDTARRLFTLVCVLHWRG</sequence>
<comment type="similarity">
    <text evidence="1">Belongs to the UPF0262 family.</text>
</comment>
<name>Y6455_RHILO</name>
<accession>Q989E8</accession>
<proteinExistence type="inferred from homology"/>